<sequence>MEFVDEKRYRKIKNGVGRAVADFNLIEEGDRIAVAVSGGKDSYTLLHILEALRRRAPVKYDLVAFTIDSGYPGFRSDVIAAHLKEHGFSHHVEATTHYDIIKEKRRPGSSYCSICARLKRGVLYTLAQQHGCNKLALGHHLDDFVETLLLNQFFVGTLKAMAPRMLADNGATTVIRPLVYVEEREIIPFARENSFPVVCCCCPVCGKADIQRKRMKELLKELERENPAVKRSLLRALANVQPRHLLDRELQRVCEVP</sequence>
<feature type="chain" id="PRO_0000348744" description="tRNA-cytidine(32) 2-sulfurtransferase">
    <location>
        <begin position="1"/>
        <end position="257"/>
    </location>
</feature>
<feature type="short sequence motif" description="PP-loop motif" evidence="1">
    <location>
        <begin position="37"/>
        <end position="42"/>
    </location>
</feature>
<feature type="binding site" evidence="1">
    <location>
        <position position="112"/>
    </location>
    <ligand>
        <name>[4Fe-4S] cluster</name>
        <dbReference type="ChEBI" id="CHEBI:49883"/>
    </ligand>
</feature>
<feature type="binding site" evidence="1">
    <location>
        <position position="115"/>
    </location>
    <ligand>
        <name>[4Fe-4S] cluster</name>
        <dbReference type="ChEBI" id="CHEBI:49883"/>
    </ligand>
</feature>
<feature type="binding site" evidence="1">
    <location>
        <position position="202"/>
    </location>
    <ligand>
        <name>[4Fe-4S] cluster</name>
        <dbReference type="ChEBI" id="CHEBI:49883"/>
    </ligand>
</feature>
<keyword id="KW-0004">4Fe-4S</keyword>
<keyword id="KW-0067">ATP-binding</keyword>
<keyword id="KW-0963">Cytoplasm</keyword>
<keyword id="KW-0408">Iron</keyword>
<keyword id="KW-0411">Iron-sulfur</keyword>
<keyword id="KW-0460">Magnesium</keyword>
<keyword id="KW-0479">Metal-binding</keyword>
<keyword id="KW-0547">Nucleotide-binding</keyword>
<keyword id="KW-1185">Reference proteome</keyword>
<keyword id="KW-0694">RNA-binding</keyword>
<keyword id="KW-0808">Transferase</keyword>
<keyword id="KW-0819">tRNA processing</keyword>
<keyword id="KW-0820">tRNA-binding</keyword>
<reference key="1">
    <citation type="journal article" date="2009" name="BMC Microbiol.">
        <title>The genome sequence of Geobacter metallireducens: features of metabolism, physiology and regulation common and dissimilar to Geobacter sulfurreducens.</title>
        <authorList>
            <person name="Aklujkar M."/>
            <person name="Krushkal J."/>
            <person name="DiBartolo G."/>
            <person name="Lapidus A."/>
            <person name="Land M.L."/>
            <person name="Lovley D.R."/>
        </authorList>
    </citation>
    <scope>NUCLEOTIDE SEQUENCE [LARGE SCALE GENOMIC DNA]</scope>
    <source>
        <strain>ATCC 53774 / DSM 7210 / GS-15</strain>
    </source>
</reference>
<proteinExistence type="inferred from homology"/>
<name>TTCA_GEOMG</name>
<accession>Q39QC5</accession>
<organism>
    <name type="scientific">Geobacter metallireducens (strain ATCC 53774 / DSM 7210 / GS-15)</name>
    <dbReference type="NCBI Taxonomy" id="269799"/>
    <lineage>
        <taxon>Bacteria</taxon>
        <taxon>Pseudomonadati</taxon>
        <taxon>Thermodesulfobacteriota</taxon>
        <taxon>Desulfuromonadia</taxon>
        <taxon>Geobacterales</taxon>
        <taxon>Geobacteraceae</taxon>
        <taxon>Geobacter</taxon>
    </lineage>
</organism>
<gene>
    <name evidence="1" type="primary">ttcA</name>
    <name type="ordered locus">Gmet_3336</name>
</gene>
<protein>
    <recommendedName>
        <fullName evidence="1">tRNA-cytidine(32) 2-sulfurtransferase</fullName>
        <ecNumber evidence="1">2.8.1.-</ecNumber>
    </recommendedName>
    <alternativeName>
        <fullName evidence="1">Two-thiocytidine biosynthesis protein A</fullName>
    </alternativeName>
    <alternativeName>
        <fullName evidence="1">tRNA 2-thiocytidine biosynthesis protein TtcA</fullName>
    </alternativeName>
</protein>
<comment type="function">
    <text evidence="1">Catalyzes the ATP-dependent 2-thiolation of cytidine in position 32 of tRNA, to form 2-thiocytidine (s(2)C32). The sulfur atoms are provided by the cysteine/cysteine desulfurase (IscS) system.</text>
</comment>
<comment type="catalytic activity">
    <reaction evidence="1">
        <text>cytidine(32) in tRNA + S-sulfanyl-L-cysteinyl-[cysteine desulfurase] + AH2 + ATP = 2-thiocytidine(32) in tRNA + L-cysteinyl-[cysteine desulfurase] + A + AMP + diphosphate + H(+)</text>
        <dbReference type="Rhea" id="RHEA:57048"/>
        <dbReference type="Rhea" id="RHEA-COMP:10288"/>
        <dbReference type="Rhea" id="RHEA-COMP:12157"/>
        <dbReference type="Rhea" id="RHEA-COMP:12158"/>
        <dbReference type="Rhea" id="RHEA-COMP:14821"/>
        <dbReference type="ChEBI" id="CHEBI:13193"/>
        <dbReference type="ChEBI" id="CHEBI:15378"/>
        <dbReference type="ChEBI" id="CHEBI:17499"/>
        <dbReference type="ChEBI" id="CHEBI:29950"/>
        <dbReference type="ChEBI" id="CHEBI:30616"/>
        <dbReference type="ChEBI" id="CHEBI:33019"/>
        <dbReference type="ChEBI" id="CHEBI:61963"/>
        <dbReference type="ChEBI" id="CHEBI:82748"/>
        <dbReference type="ChEBI" id="CHEBI:141453"/>
        <dbReference type="ChEBI" id="CHEBI:456215"/>
    </reaction>
    <physiologicalReaction direction="left-to-right" evidence="1">
        <dbReference type="Rhea" id="RHEA:57049"/>
    </physiologicalReaction>
</comment>
<comment type="cofactor">
    <cofactor evidence="1">
        <name>Mg(2+)</name>
        <dbReference type="ChEBI" id="CHEBI:18420"/>
    </cofactor>
</comment>
<comment type="cofactor">
    <cofactor evidence="1">
        <name>[4Fe-4S] cluster</name>
        <dbReference type="ChEBI" id="CHEBI:49883"/>
    </cofactor>
    <text evidence="1">Binds 1 [4Fe-4S] cluster per subunit. The cluster is chelated by three Cys residues, the fourth Fe has a free coordination site that may bind a sulfur atom transferred from the persulfide of IscS.</text>
</comment>
<comment type="pathway">
    <text evidence="1">tRNA modification.</text>
</comment>
<comment type="subunit">
    <text evidence="1">Homodimer.</text>
</comment>
<comment type="subcellular location">
    <subcellularLocation>
        <location evidence="1">Cytoplasm</location>
    </subcellularLocation>
</comment>
<comment type="miscellaneous">
    <text evidence="1">The thiolation reaction likely consists of two steps: a first activation step by ATP to form an adenylated intermediate of the target base of tRNA, and a second nucleophilic substitution step of the sulfur (S) atom supplied by the hydrosulfide attached to the Fe-S cluster.</text>
</comment>
<comment type="similarity">
    <text evidence="1">Belongs to the TtcA family.</text>
</comment>
<evidence type="ECO:0000255" key="1">
    <source>
        <dbReference type="HAMAP-Rule" id="MF_01850"/>
    </source>
</evidence>
<dbReference type="EC" id="2.8.1.-" evidence="1"/>
<dbReference type="EMBL" id="CP000148">
    <property type="protein sequence ID" value="ABB33549.2"/>
    <property type="molecule type" value="Genomic_DNA"/>
</dbReference>
<dbReference type="RefSeq" id="WP_004512561.1">
    <property type="nucleotide sequence ID" value="NC_007517.1"/>
</dbReference>
<dbReference type="SMR" id="Q39QC5"/>
<dbReference type="STRING" id="269799.Gmet_3336"/>
<dbReference type="KEGG" id="gme:Gmet_3336"/>
<dbReference type="eggNOG" id="COG0037">
    <property type="taxonomic scope" value="Bacteria"/>
</dbReference>
<dbReference type="HOGENOM" id="CLU_026481_0_0_7"/>
<dbReference type="Proteomes" id="UP000007073">
    <property type="component" value="Chromosome"/>
</dbReference>
<dbReference type="GO" id="GO:0005737">
    <property type="term" value="C:cytoplasm"/>
    <property type="evidence" value="ECO:0007669"/>
    <property type="project" value="UniProtKB-SubCell"/>
</dbReference>
<dbReference type="GO" id="GO:0051539">
    <property type="term" value="F:4 iron, 4 sulfur cluster binding"/>
    <property type="evidence" value="ECO:0007669"/>
    <property type="project" value="UniProtKB-KW"/>
</dbReference>
<dbReference type="GO" id="GO:0005524">
    <property type="term" value="F:ATP binding"/>
    <property type="evidence" value="ECO:0007669"/>
    <property type="project" value="UniProtKB-KW"/>
</dbReference>
<dbReference type="GO" id="GO:0046872">
    <property type="term" value="F:metal ion binding"/>
    <property type="evidence" value="ECO:0007669"/>
    <property type="project" value="UniProtKB-KW"/>
</dbReference>
<dbReference type="GO" id="GO:0016740">
    <property type="term" value="F:transferase activity"/>
    <property type="evidence" value="ECO:0007669"/>
    <property type="project" value="UniProtKB-KW"/>
</dbReference>
<dbReference type="GO" id="GO:0000049">
    <property type="term" value="F:tRNA binding"/>
    <property type="evidence" value="ECO:0007669"/>
    <property type="project" value="UniProtKB-KW"/>
</dbReference>
<dbReference type="GO" id="GO:0006400">
    <property type="term" value="P:tRNA modification"/>
    <property type="evidence" value="ECO:0007669"/>
    <property type="project" value="UniProtKB-ARBA"/>
</dbReference>
<dbReference type="CDD" id="cd24138">
    <property type="entry name" value="TtcA-like"/>
    <property type="match status" value="1"/>
</dbReference>
<dbReference type="Gene3D" id="3.40.50.620">
    <property type="entry name" value="HUPs"/>
    <property type="match status" value="1"/>
</dbReference>
<dbReference type="HAMAP" id="MF_01850">
    <property type="entry name" value="TtcA"/>
    <property type="match status" value="1"/>
</dbReference>
<dbReference type="InterPro" id="IPR014729">
    <property type="entry name" value="Rossmann-like_a/b/a_fold"/>
</dbReference>
<dbReference type="InterPro" id="IPR011063">
    <property type="entry name" value="TilS/TtcA_N"/>
</dbReference>
<dbReference type="InterPro" id="IPR012089">
    <property type="entry name" value="tRNA_Cyd_32_2_STrfase"/>
</dbReference>
<dbReference type="InterPro" id="IPR035107">
    <property type="entry name" value="tRNA_thiolation_TtcA_Ctu1"/>
</dbReference>
<dbReference type="NCBIfam" id="NF007972">
    <property type="entry name" value="PRK10696.1"/>
    <property type="match status" value="1"/>
</dbReference>
<dbReference type="PANTHER" id="PTHR43686:SF1">
    <property type="entry name" value="AMINOTRAN_5 DOMAIN-CONTAINING PROTEIN"/>
    <property type="match status" value="1"/>
</dbReference>
<dbReference type="PANTHER" id="PTHR43686">
    <property type="entry name" value="SULFURTRANSFERASE-RELATED"/>
    <property type="match status" value="1"/>
</dbReference>
<dbReference type="Pfam" id="PF01171">
    <property type="entry name" value="ATP_bind_3"/>
    <property type="match status" value="1"/>
</dbReference>
<dbReference type="PIRSF" id="PIRSF004976">
    <property type="entry name" value="ATPase_YdaO"/>
    <property type="match status" value="1"/>
</dbReference>
<dbReference type="SUPFAM" id="SSF52402">
    <property type="entry name" value="Adenine nucleotide alpha hydrolases-like"/>
    <property type="match status" value="1"/>
</dbReference>